<comment type="function">
    <text evidence="1">One of the essential components for the initiation of protein synthesis. Stabilizes the binding of IF-2 and IF-3 on the 30S subunit to which N-formylmethionyl-tRNA(fMet) subsequently binds. Helps modulate mRNA selection, yielding the 30S pre-initiation complex (PIC). Upon addition of the 50S ribosomal subunit IF-1, IF-2 and IF-3 are released leaving the mature 70S translation initiation complex.</text>
</comment>
<comment type="subunit">
    <text evidence="1">Component of the 30S ribosomal translation pre-initiation complex which assembles on the 30S ribosome in the order IF-2 and IF-3, IF-1 and N-formylmethionyl-tRNA(fMet); mRNA recruitment can occur at any time during PIC assembly.</text>
</comment>
<comment type="subcellular location">
    <subcellularLocation>
        <location evidence="1">Cytoplasm</location>
    </subcellularLocation>
</comment>
<comment type="similarity">
    <text evidence="1">Belongs to the IF-1 family.</text>
</comment>
<keyword id="KW-0963">Cytoplasm</keyword>
<keyword id="KW-0396">Initiation factor</keyword>
<keyword id="KW-0648">Protein biosynthesis</keyword>
<keyword id="KW-0694">RNA-binding</keyword>
<keyword id="KW-0699">rRNA-binding</keyword>
<sequence length="73" mass="8505">MANKEELIEFEGVVTETLPNTMFRVRLENGHEVIAHISGKMRKHYIRILTGDNVKVEMTPYDLSKGRITYRAR</sequence>
<protein>
    <recommendedName>
        <fullName evidence="1">Translation initiation factor IF-1</fullName>
    </recommendedName>
</protein>
<reference key="1">
    <citation type="journal article" date="2004" name="Nucleic Acids Res.">
        <title>Unique features revealed by the genome sequence of Acinetobacter sp. ADP1, a versatile and naturally transformation competent bacterium.</title>
        <authorList>
            <person name="Barbe V."/>
            <person name="Vallenet D."/>
            <person name="Fonknechten N."/>
            <person name="Kreimeyer A."/>
            <person name="Oztas S."/>
            <person name="Labarre L."/>
            <person name="Cruveiller S."/>
            <person name="Robert C."/>
            <person name="Duprat S."/>
            <person name="Wincker P."/>
            <person name="Ornston L.N."/>
            <person name="Weissenbach J."/>
            <person name="Marliere P."/>
            <person name="Cohen G.N."/>
            <person name="Medigue C."/>
        </authorList>
    </citation>
    <scope>NUCLEOTIDE SEQUENCE [LARGE SCALE GENOMIC DNA]</scope>
    <source>
        <strain>ATCC 33305 / BD413 / ADP1</strain>
    </source>
</reference>
<dbReference type="EMBL" id="CR543861">
    <property type="protein sequence ID" value="CAG67404.1"/>
    <property type="molecule type" value="Genomic_DNA"/>
</dbReference>
<dbReference type="RefSeq" id="WP_004920223.1">
    <property type="nucleotide sequence ID" value="NC_005966.1"/>
</dbReference>
<dbReference type="SMR" id="Q6FEV4"/>
<dbReference type="STRING" id="202950.GCA_001485005_00718"/>
<dbReference type="GeneID" id="67512226"/>
<dbReference type="KEGG" id="aci:ACIAD0472"/>
<dbReference type="eggNOG" id="COG0361">
    <property type="taxonomic scope" value="Bacteria"/>
</dbReference>
<dbReference type="HOGENOM" id="CLU_151267_1_0_6"/>
<dbReference type="OrthoDB" id="9803250at2"/>
<dbReference type="BioCyc" id="ASP62977:ACIAD_RS02155-MONOMER"/>
<dbReference type="Proteomes" id="UP000000430">
    <property type="component" value="Chromosome"/>
</dbReference>
<dbReference type="GO" id="GO:0005829">
    <property type="term" value="C:cytosol"/>
    <property type="evidence" value="ECO:0007669"/>
    <property type="project" value="TreeGrafter"/>
</dbReference>
<dbReference type="GO" id="GO:0043022">
    <property type="term" value="F:ribosome binding"/>
    <property type="evidence" value="ECO:0007669"/>
    <property type="project" value="UniProtKB-UniRule"/>
</dbReference>
<dbReference type="GO" id="GO:0019843">
    <property type="term" value="F:rRNA binding"/>
    <property type="evidence" value="ECO:0007669"/>
    <property type="project" value="UniProtKB-UniRule"/>
</dbReference>
<dbReference type="GO" id="GO:0003743">
    <property type="term" value="F:translation initiation factor activity"/>
    <property type="evidence" value="ECO:0007669"/>
    <property type="project" value="UniProtKB-UniRule"/>
</dbReference>
<dbReference type="CDD" id="cd04451">
    <property type="entry name" value="S1_IF1"/>
    <property type="match status" value="1"/>
</dbReference>
<dbReference type="FunFam" id="2.40.50.140:FF:000002">
    <property type="entry name" value="Translation initiation factor IF-1"/>
    <property type="match status" value="1"/>
</dbReference>
<dbReference type="Gene3D" id="2.40.50.140">
    <property type="entry name" value="Nucleic acid-binding proteins"/>
    <property type="match status" value="1"/>
</dbReference>
<dbReference type="HAMAP" id="MF_00075">
    <property type="entry name" value="IF_1"/>
    <property type="match status" value="1"/>
</dbReference>
<dbReference type="InterPro" id="IPR012340">
    <property type="entry name" value="NA-bd_OB-fold"/>
</dbReference>
<dbReference type="InterPro" id="IPR006196">
    <property type="entry name" value="RNA-binding_domain_S1_IF1"/>
</dbReference>
<dbReference type="InterPro" id="IPR003029">
    <property type="entry name" value="S1_domain"/>
</dbReference>
<dbReference type="InterPro" id="IPR004368">
    <property type="entry name" value="TIF_IF1"/>
</dbReference>
<dbReference type="NCBIfam" id="TIGR00008">
    <property type="entry name" value="infA"/>
    <property type="match status" value="1"/>
</dbReference>
<dbReference type="PANTHER" id="PTHR33370">
    <property type="entry name" value="TRANSLATION INITIATION FACTOR IF-1, CHLOROPLASTIC"/>
    <property type="match status" value="1"/>
</dbReference>
<dbReference type="PANTHER" id="PTHR33370:SF1">
    <property type="entry name" value="TRANSLATION INITIATION FACTOR IF-1, CHLOROPLASTIC"/>
    <property type="match status" value="1"/>
</dbReference>
<dbReference type="Pfam" id="PF01176">
    <property type="entry name" value="eIF-1a"/>
    <property type="match status" value="1"/>
</dbReference>
<dbReference type="SMART" id="SM00316">
    <property type="entry name" value="S1"/>
    <property type="match status" value="1"/>
</dbReference>
<dbReference type="SUPFAM" id="SSF50249">
    <property type="entry name" value="Nucleic acid-binding proteins"/>
    <property type="match status" value="1"/>
</dbReference>
<dbReference type="PROSITE" id="PS50832">
    <property type="entry name" value="S1_IF1_TYPE"/>
    <property type="match status" value="1"/>
</dbReference>
<organism>
    <name type="scientific">Acinetobacter baylyi (strain ATCC 33305 / BD413 / ADP1)</name>
    <dbReference type="NCBI Taxonomy" id="62977"/>
    <lineage>
        <taxon>Bacteria</taxon>
        <taxon>Pseudomonadati</taxon>
        <taxon>Pseudomonadota</taxon>
        <taxon>Gammaproteobacteria</taxon>
        <taxon>Moraxellales</taxon>
        <taxon>Moraxellaceae</taxon>
        <taxon>Acinetobacter</taxon>
    </lineage>
</organism>
<name>IF1_ACIAD</name>
<gene>
    <name evidence="1" type="primary">infA</name>
    <name type="ordered locus">ACIAD0472</name>
</gene>
<accession>Q6FEV4</accession>
<evidence type="ECO:0000255" key="1">
    <source>
        <dbReference type="HAMAP-Rule" id="MF_00075"/>
    </source>
</evidence>
<proteinExistence type="inferred from homology"/>
<feature type="chain" id="PRO_0000095724" description="Translation initiation factor IF-1">
    <location>
        <begin position="1"/>
        <end position="73"/>
    </location>
</feature>
<feature type="domain" description="S1-like" evidence="1">
    <location>
        <begin position="1"/>
        <end position="73"/>
    </location>
</feature>